<protein>
    <recommendedName>
        <fullName>Non-disjunction protein 1</fullName>
    </recommendedName>
    <alternativeName>
        <fullName>Telomere-associated meiosis protein 1</fullName>
    </alternativeName>
</protein>
<evidence type="ECO:0000269" key="1">
    <source>
    </source>
</evidence>
<evidence type="ECO:0000269" key="2">
    <source>
    </source>
</evidence>
<evidence type="ECO:0000269" key="3">
    <source>
    </source>
</evidence>
<evidence type="ECO:0000269" key="4">
    <source>
    </source>
</evidence>
<evidence type="ECO:0000269" key="5">
    <source>
    </source>
</evidence>
<evidence type="ECO:0000269" key="6">
    <source>
    </source>
</evidence>
<evidence type="ECO:0000269" key="7">
    <source>
    </source>
</evidence>
<evidence type="ECO:0000269" key="8">
    <source>
    </source>
</evidence>
<evidence type="ECO:0000269" key="9">
    <source>
    </source>
</evidence>
<evidence type="ECO:0000269" key="10">
    <source>
    </source>
</evidence>
<evidence type="ECO:0000269" key="11">
    <source>
    </source>
</evidence>
<proteinExistence type="evidence at protein level"/>
<name>NDJ1_YEAST</name>
<keyword id="KW-0158">Chromosome</keyword>
<keyword id="KW-0469">Meiosis</keyword>
<keyword id="KW-0539">Nucleus</keyword>
<keyword id="KW-1185">Reference proteome</keyword>
<keyword id="KW-0779">Telomere</keyword>
<comment type="function">
    <text evidence="1 2 3 4 6 7 8 9 10 11">Required for telomeric clustering (bouquet stage) during meiosis 1 prophase, formation and efficient homolog pairing, meiosis 1 disjunction, and telomere deletion during meiosis. Also promotes meiotic recombination.</text>
</comment>
<comment type="subunit">
    <text evidence="7 8">Interacts with MPS3.</text>
</comment>
<comment type="interaction">
    <interactant intactId="EBI-34568">
        <id>Q12366</id>
    </interactant>
    <interactant intactId="EBI-25811">
        <id>P47069</id>
        <label>MPS3</label>
    </interactant>
    <organismsDiffer>false</organismsDiffer>
    <experiments>2</experiments>
</comment>
<comment type="subcellular location">
    <subcellularLocation>
        <location evidence="2 5 9 10">Nucleus</location>
    </subcellularLocation>
    <subcellularLocation>
        <location evidence="2 5 9 10">Chromosome</location>
        <location evidence="2 5 9 10">Telomere</location>
    </subcellularLocation>
</comment>
<comment type="induction">
    <text evidence="10">During meiosis.</text>
</comment>
<dbReference type="EMBL" id="Z48149">
    <property type="protein sequence ID" value="CAA88156.1"/>
    <property type="molecule type" value="Genomic_DNA"/>
</dbReference>
<dbReference type="EMBL" id="Z74846">
    <property type="protein sequence ID" value="CAA99120.1"/>
    <property type="molecule type" value="Genomic_DNA"/>
</dbReference>
<dbReference type="EMBL" id="AY693102">
    <property type="protein sequence ID" value="AAT93121.1"/>
    <property type="molecule type" value="Genomic_DNA"/>
</dbReference>
<dbReference type="EMBL" id="BK006948">
    <property type="protein sequence ID" value="DAA10678.1"/>
    <property type="molecule type" value="Genomic_DNA"/>
</dbReference>
<dbReference type="PIR" id="S51893">
    <property type="entry name" value="S51893"/>
</dbReference>
<dbReference type="RefSeq" id="NP_014537.1">
    <property type="nucleotide sequence ID" value="NM_001183358.1"/>
</dbReference>
<dbReference type="BioGRID" id="34297">
    <property type="interactions" value="57"/>
</dbReference>
<dbReference type="DIP" id="DIP-4221N"/>
<dbReference type="FunCoup" id="Q12366">
    <property type="interactions" value="78"/>
</dbReference>
<dbReference type="IntAct" id="Q12366">
    <property type="interactions" value="1"/>
</dbReference>
<dbReference type="STRING" id="4932.YOL104C"/>
<dbReference type="iPTMnet" id="Q12366"/>
<dbReference type="PaxDb" id="4932-YOL104C"/>
<dbReference type="PeptideAtlas" id="Q12366"/>
<dbReference type="PRIDE" id="Q12366"/>
<dbReference type="EnsemblFungi" id="YOL104C_mRNA">
    <property type="protein sequence ID" value="YOL104C"/>
    <property type="gene ID" value="YOL104C"/>
</dbReference>
<dbReference type="GeneID" id="854047"/>
<dbReference type="KEGG" id="sce:YOL104C"/>
<dbReference type="AGR" id="SGD:S000005464"/>
<dbReference type="SGD" id="S000005464">
    <property type="gene designation" value="NDJ1"/>
</dbReference>
<dbReference type="VEuPathDB" id="FungiDB:YOL104C"/>
<dbReference type="eggNOG" id="ENOG502S4WZ">
    <property type="taxonomic scope" value="Eukaryota"/>
</dbReference>
<dbReference type="HOGENOM" id="CLU_861098_0_0_1"/>
<dbReference type="InParanoid" id="Q12366"/>
<dbReference type="OMA" id="CIIPRIC"/>
<dbReference type="OrthoDB" id="4038005at2759"/>
<dbReference type="BioCyc" id="YEAST:G3O-33502-MONOMER"/>
<dbReference type="BioGRID-ORCS" id="854047">
    <property type="hits" value="4 hits in 10 CRISPR screens"/>
</dbReference>
<dbReference type="PRO" id="PR:Q12366"/>
<dbReference type="Proteomes" id="UP000002311">
    <property type="component" value="Chromosome XV"/>
</dbReference>
<dbReference type="RNAct" id="Q12366">
    <property type="molecule type" value="protein"/>
</dbReference>
<dbReference type="GO" id="GO:0000781">
    <property type="term" value="C:chromosome, telomeric region"/>
    <property type="evidence" value="ECO:0000314"/>
    <property type="project" value="SGD"/>
</dbReference>
<dbReference type="GO" id="GO:0035974">
    <property type="term" value="C:meiotic spindle pole body"/>
    <property type="evidence" value="ECO:0000314"/>
    <property type="project" value="SGD"/>
</dbReference>
<dbReference type="GO" id="GO:0005634">
    <property type="term" value="C:nucleus"/>
    <property type="evidence" value="ECO:0007669"/>
    <property type="project" value="UniProtKB-SubCell"/>
</dbReference>
<dbReference type="GO" id="GO:0042162">
    <property type="term" value="F:telomeric DNA binding"/>
    <property type="evidence" value="ECO:0000304"/>
    <property type="project" value="SGD"/>
</dbReference>
<dbReference type="GO" id="GO:0007129">
    <property type="term" value="P:homologous chromosome pairing at meiosis"/>
    <property type="evidence" value="ECO:0000314"/>
    <property type="project" value="SGD"/>
</dbReference>
<dbReference type="GO" id="GO:0070197">
    <property type="term" value="P:meiotic attachment of telomere to nuclear envelope"/>
    <property type="evidence" value="ECO:0000315"/>
    <property type="project" value="SGD"/>
</dbReference>
<dbReference type="GO" id="GO:0045141">
    <property type="term" value="P:meiotic telomere clustering"/>
    <property type="evidence" value="ECO:0000314"/>
    <property type="project" value="SGD"/>
</dbReference>
<dbReference type="GO" id="GO:2000711">
    <property type="term" value="P:positive regulation of maintenance of meiotic sister chromatid cohesion, centromeric"/>
    <property type="evidence" value="ECO:0000315"/>
    <property type="project" value="SGD"/>
</dbReference>
<dbReference type="GO" id="GO:0007131">
    <property type="term" value="P:reciprocal meiotic recombination"/>
    <property type="evidence" value="ECO:0000315"/>
    <property type="project" value="SGD"/>
</dbReference>
<dbReference type="GO" id="GO:0010520">
    <property type="term" value="P:regulation of reciprocal meiotic recombination"/>
    <property type="evidence" value="ECO:0000315"/>
    <property type="project" value="SGD"/>
</dbReference>
<feature type="chain" id="PRO_0000268688" description="Non-disjunction protein 1">
    <location>
        <begin position="1"/>
        <end position="352"/>
    </location>
</feature>
<reference key="1">
    <citation type="journal article" date="1995" name="Yeast">
        <title>Sequence analysis of a 44 kb DNA fragment of yeast chromosome XV including the Ty1-H3 retrotransposon, the suf1(+) frameshift suppressor gene for tRNA-Gly, the yeast transfer RNA-Thr-1a and a delta element.</title>
        <authorList>
            <person name="Vandenbol M."/>
            <person name="Durand P."/>
            <person name="Portetelle D."/>
            <person name="Hilger F."/>
        </authorList>
    </citation>
    <scope>NUCLEOTIDE SEQUENCE [GENOMIC DNA]</scope>
</reference>
<reference key="2">
    <citation type="journal article" date="1997" name="Nature">
        <title>The nucleotide sequence of Saccharomyces cerevisiae chromosome XV.</title>
        <authorList>
            <person name="Dujon B."/>
            <person name="Albermann K."/>
            <person name="Aldea M."/>
            <person name="Alexandraki D."/>
            <person name="Ansorge W."/>
            <person name="Arino J."/>
            <person name="Benes V."/>
            <person name="Bohn C."/>
            <person name="Bolotin-Fukuhara M."/>
            <person name="Bordonne R."/>
            <person name="Boyer J."/>
            <person name="Camasses A."/>
            <person name="Casamayor A."/>
            <person name="Casas C."/>
            <person name="Cheret G."/>
            <person name="Cziepluch C."/>
            <person name="Daignan-Fornier B."/>
            <person name="Dang V.-D."/>
            <person name="de Haan M."/>
            <person name="Delius H."/>
            <person name="Durand P."/>
            <person name="Fairhead C."/>
            <person name="Feldmann H."/>
            <person name="Gaillon L."/>
            <person name="Galisson F."/>
            <person name="Gamo F.-J."/>
            <person name="Gancedo C."/>
            <person name="Goffeau A."/>
            <person name="Goulding S.E."/>
            <person name="Grivell L.A."/>
            <person name="Habbig B."/>
            <person name="Hand N.J."/>
            <person name="Hani J."/>
            <person name="Hattenhorst U."/>
            <person name="Hebling U."/>
            <person name="Hernando Y."/>
            <person name="Herrero E."/>
            <person name="Heumann K."/>
            <person name="Hiesel R."/>
            <person name="Hilger F."/>
            <person name="Hofmann B."/>
            <person name="Hollenberg C.P."/>
            <person name="Hughes B."/>
            <person name="Jauniaux J.-C."/>
            <person name="Kalogeropoulos A."/>
            <person name="Katsoulou C."/>
            <person name="Kordes E."/>
            <person name="Lafuente M.J."/>
            <person name="Landt O."/>
            <person name="Louis E.J."/>
            <person name="Maarse A.C."/>
            <person name="Madania A."/>
            <person name="Mannhaupt G."/>
            <person name="Marck C."/>
            <person name="Martin R.P."/>
            <person name="Mewes H.-W."/>
            <person name="Michaux G."/>
            <person name="Paces V."/>
            <person name="Parle-McDermott A.G."/>
            <person name="Pearson B.M."/>
            <person name="Perrin A."/>
            <person name="Pettersson B."/>
            <person name="Poch O."/>
            <person name="Pohl T.M."/>
            <person name="Poirey R."/>
            <person name="Portetelle D."/>
            <person name="Pujol A."/>
            <person name="Purnelle B."/>
            <person name="Ramezani Rad M."/>
            <person name="Rechmann S."/>
            <person name="Schwager C."/>
            <person name="Schweizer M."/>
            <person name="Sor F."/>
            <person name="Sterky F."/>
            <person name="Tarassov I.A."/>
            <person name="Teodoru C."/>
            <person name="Tettelin H."/>
            <person name="Thierry A."/>
            <person name="Tobiasch E."/>
            <person name="Tzermia M."/>
            <person name="Uhlen M."/>
            <person name="Unseld M."/>
            <person name="Valens M."/>
            <person name="Vandenbol M."/>
            <person name="Vetter I."/>
            <person name="Vlcek C."/>
            <person name="Voet M."/>
            <person name="Volckaert G."/>
            <person name="Voss H."/>
            <person name="Wambutt R."/>
            <person name="Wedler H."/>
            <person name="Wiemann S."/>
            <person name="Winsor B."/>
            <person name="Wolfe K.H."/>
            <person name="Zollner A."/>
            <person name="Zumstein E."/>
            <person name="Kleine K."/>
        </authorList>
    </citation>
    <scope>NUCLEOTIDE SEQUENCE [LARGE SCALE GENOMIC DNA]</scope>
    <source>
        <strain>ATCC 204508 / S288c</strain>
    </source>
</reference>
<reference key="3">
    <citation type="journal article" date="2014" name="G3 (Bethesda)">
        <title>The reference genome sequence of Saccharomyces cerevisiae: Then and now.</title>
        <authorList>
            <person name="Engel S.R."/>
            <person name="Dietrich F.S."/>
            <person name="Fisk D.G."/>
            <person name="Binkley G."/>
            <person name="Balakrishnan R."/>
            <person name="Costanzo M.C."/>
            <person name="Dwight S.S."/>
            <person name="Hitz B.C."/>
            <person name="Karra K."/>
            <person name="Nash R.S."/>
            <person name="Weng S."/>
            <person name="Wong E.D."/>
            <person name="Lloyd P."/>
            <person name="Skrzypek M.S."/>
            <person name="Miyasato S.R."/>
            <person name="Simison M."/>
            <person name="Cherry J.M."/>
        </authorList>
    </citation>
    <scope>GENOME REANNOTATION</scope>
    <source>
        <strain>ATCC 204508 / S288c</strain>
    </source>
</reference>
<reference key="4">
    <citation type="journal article" date="2007" name="Genome Res.">
        <title>Approaching a complete repository of sequence-verified protein-encoding clones for Saccharomyces cerevisiae.</title>
        <authorList>
            <person name="Hu Y."/>
            <person name="Rolfs A."/>
            <person name="Bhullar B."/>
            <person name="Murthy T.V.S."/>
            <person name="Zhu C."/>
            <person name="Berger M.F."/>
            <person name="Camargo A.A."/>
            <person name="Kelley F."/>
            <person name="McCarron S."/>
            <person name="Jepson D."/>
            <person name="Richardson A."/>
            <person name="Raphael J."/>
            <person name="Moreira D."/>
            <person name="Taycher E."/>
            <person name="Zuo D."/>
            <person name="Mohr S."/>
            <person name="Kane M.F."/>
            <person name="Williamson J."/>
            <person name="Simpson A.J.G."/>
            <person name="Bulyk M.L."/>
            <person name="Harlow E."/>
            <person name="Marsischky G."/>
            <person name="Kolodner R.D."/>
            <person name="LaBaer J."/>
        </authorList>
    </citation>
    <scope>NUCLEOTIDE SEQUENCE [GENOMIC DNA]</scope>
    <source>
        <strain>ATCC 204508 / S288c</strain>
    </source>
</reference>
<reference key="5">
    <citation type="journal article" date="1997" name="Genes Dev.">
        <title>Tam1, a telomere-associated meiotic protein, functions in chromosome synapsis and crossover interference.</title>
        <authorList>
            <person name="Chua P.R."/>
            <person name="Roeder G.S."/>
        </authorList>
    </citation>
    <scope>FUNCTION</scope>
    <scope>SUBCELLULAR LOCATION</scope>
    <scope>INDUCTION</scope>
</reference>
<reference key="6">
    <citation type="journal article" date="1997" name="Science">
        <title>Ndj1p, a meiotic telomere protein required for normal chromosome synapsis and segregation in yeast.</title>
        <authorList>
            <person name="Conrad M.N."/>
            <person name="Dominguez A.M."/>
            <person name="Dresser M.E."/>
        </authorList>
    </citation>
    <scope>FUNCTION</scope>
    <scope>SUBCELLULAR LOCATION</scope>
</reference>
<reference key="7">
    <citation type="journal article" date="1998" name="Genes Dev.">
        <title>Telomere-mediated chromosome pairing during meiosis in budding yeast.</title>
        <authorList>
            <person name="Rockmill B."/>
            <person name="Roeder G.S."/>
        </authorList>
    </citation>
    <scope>FUNCTION</scope>
</reference>
<reference key="8">
    <citation type="journal article" date="2000" name="J. Cell Biol.">
        <title>Meiotic telomere protein Ndj1p is required for meiosis-specific telomere distribution, bouquet formation and efficient homologue pairing.</title>
        <authorList>
            <person name="Trelles-Sticken E."/>
            <person name="Dresser M.E."/>
            <person name="Scherthan H."/>
        </authorList>
    </citation>
    <scope>FUNCTION</scope>
    <scope>SUBCELLULAR LOCATION</scope>
</reference>
<reference key="9">
    <citation type="journal article" date="2000" name="Proc. Natl. Acad. Sci. U.S.A.">
        <title>Restriction of ectopic recombination by interhomolog interactions during Saccharomyces cerevisiae meiosis.</title>
        <authorList>
            <person name="Goldman A.S.H."/>
            <person name="Lichten M."/>
        </authorList>
    </citation>
    <scope>FUNCTION</scope>
</reference>
<reference key="10">
    <citation type="journal article" date="2004" name="Genetics">
        <title>Compartmentalization of the yeast meiotic nucleus revealed by analysis of ectopic recombination.</title>
        <authorList>
            <person name="Schlecht H.B."/>
            <person name="Lichten M."/>
            <person name="Goldman A.S.H."/>
        </authorList>
    </citation>
    <scope>FUNCTION</scope>
</reference>
<reference key="11">
    <citation type="journal article" date="2005" name="Curr. Biol.">
        <title>Ndj1p-dependent epigenetic resetting of telomere size in yeast meiosis.</title>
        <authorList>
            <person name="Joseph I."/>
            <person name="Jia D."/>
            <person name="Lustig A.J."/>
        </authorList>
    </citation>
    <scope>FUNCTION</scope>
</reference>
<reference key="12">
    <citation type="journal article" date="2005" name="J. Cell Sci.">
        <title>Set1- and Clb5-deficiencies disclose the differential regulation of centromere and telomere dynamics in Saccharomyces cerevisiae meiosis.</title>
        <authorList>
            <person name="Trelles-Sticken E."/>
            <person name="Bonfils S."/>
            <person name="Sollier J."/>
            <person name="Geli V."/>
            <person name="Scherthan H."/>
            <person name="de La Roche Saint-Andre C."/>
        </authorList>
    </citation>
    <scope>SUBCELLULAR LOCATION</scope>
</reference>
<reference key="13">
    <citation type="journal article" date="2006" name="Mol. Cell. Biol.">
        <title>Ndj1, a telomere-associated protein, promotes meiotic recombination in budding yeast.</title>
        <authorList>
            <person name="Wu H.-Y."/>
            <person name="Burgess S.M."/>
        </authorList>
    </citation>
    <scope>FUNCTION</scope>
</reference>
<reference key="14">
    <citation type="journal article" date="2007" name="Proc. Natl. Acad. Sci. U.S.A.">
        <title>MPS3 mediates meiotic bouquet formation in Saccharomyces cerevisiae.</title>
        <authorList>
            <person name="Conrad M.N."/>
            <person name="Lee C.Y."/>
            <person name="Wilkerson J.L."/>
            <person name="Dresser M.E."/>
        </authorList>
    </citation>
    <scope>FUNCTION</scope>
    <scope>INTERACTION WITH MPS3</scope>
</reference>
<reference key="15">
    <citation type="journal article" date="2008" name="Cell">
        <title>Rapid telomere movement in meiotic prophase is promoted by NDJ1, MPS3, and CSM4 and is modulated by recombination.</title>
        <authorList>
            <person name="Conrad M.N."/>
            <person name="Lee C.Y."/>
            <person name="Chao G."/>
            <person name="Shinohara M."/>
            <person name="Kosaka H."/>
            <person name="Shinohara A."/>
            <person name="Conchello J.A."/>
            <person name="Dresser M.E."/>
        </authorList>
    </citation>
    <scope>FUNCTION</scope>
    <scope>INTERACTION WITH MPS3</scope>
</reference>
<accession>Q12366</accession>
<accession>D6W1W2</accession>
<organism>
    <name type="scientific">Saccharomyces cerevisiae (strain ATCC 204508 / S288c)</name>
    <name type="common">Baker's yeast</name>
    <dbReference type="NCBI Taxonomy" id="559292"/>
    <lineage>
        <taxon>Eukaryota</taxon>
        <taxon>Fungi</taxon>
        <taxon>Dikarya</taxon>
        <taxon>Ascomycota</taxon>
        <taxon>Saccharomycotina</taxon>
        <taxon>Saccharomycetes</taxon>
        <taxon>Saccharomycetales</taxon>
        <taxon>Saccharomycetaceae</taxon>
        <taxon>Saccharomyces</taxon>
    </lineage>
</organism>
<gene>
    <name type="primary">NDJ1</name>
    <name type="synonym">TAM1</name>
    <name type="ordered locus">YOL104C</name>
</gene>
<sequence length="352" mass="40856">MSKDNRLASILLQPVASSSGNCTEFHDSKLHTLQEELNFLPLEGVASNVCPPMFRGHKNYVFVLYCLNQVDLVTNLQDSTKRYYPLQIFKDCQLSSLVQKDFSHYFQLSRQKEGEDRNDSDTTLVNVVNSGVSRHRSQLLKMCIIPRICSFDKSNSKTYKLIQEYVNRFETVLTKFGPEKDFTKVYANWSKLIESFNELILHDLLVKWQQWSELTQPNATVHQNIPNVLRELVIKLTQRYFTFQPSYSCSIDEFTTILLNKNALSLLDVFRKPRKYKLNFGLWLDCQNGILIFTNGIVQMADEITSERVKSFVRPAHLLVLEDHSNDEAVKKLMFFTFSAILQCFTDEILNC</sequence>